<sequence>MPPIKRSKPDGGVKKISITATDVTPAKGVEEKMSWKEYKKMKQHTGGGTRNKLKKKQRPPTENTEGRAKKPKVLTKEQLERHDTGADQIDPSSMRSKLQQEKMKVTKDKFQRRIEATAKAEKRLVENTGFVAPDEEDHSLTYSIRQKDIAESVDLAAATKHFELKLPRFGPYHIDYTDNGRHLVIGGRKGHLAALDWQTKHLHFEQSVMEKVSDVKFLHTENFIAVAQKNYTYVYDNLGTELHCLKTMYDTARLEFLPHHFLLVGSSRNSFLNYVDVSVGKQVASFATKSGTLDVMCQNPANAIIHTGHTNGTVSLWSPNSKEPLVKILTHLSAVKGIAVDDQGNYMATTGLDRKCRIWDVRMFRQLHAYSLPFGVSNVAISQKMNVACAVGNHVQVFRGMHNGTCKEPYLVHNCGGVVTDLRFVPWEDVLGIGHAGGFTSMLVPGAGDPNVDTLRSNPYETKSQRKEREIKQLLDKIQPELISLNPDDINKVNEGLLELEEEERKKILYIRPMAVQYTPRHKMRSKKSGWKMEARKNIVKDQIRMERNMEKHAVEKEVFEAPEVDDEAPKKKHILDRLK</sequence>
<dbReference type="EMBL" id="BX284604">
    <property type="protein sequence ID" value="CAA94597.1"/>
    <property type="molecule type" value="Genomic_DNA"/>
</dbReference>
<dbReference type="PIR" id="T21493">
    <property type="entry name" value="T21493"/>
</dbReference>
<dbReference type="RefSeq" id="NP_502358.1">
    <property type="nucleotide sequence ID" value="NM_069957.8"/>
</dbReference>
<dbReference type="SMR" id="Q19873"/>
<dbReference type="FunCoup" id="Q19873">
    <property type="interactions" value="2768"/>
</dbReference>
<dbReference type="STRING" id="6239.F28D1.1.2"/>
<dbReference type="PaxDb" id="6239-F28D1.1"/>
<dbReference type="PeptideAtlas" id="Q19873"/>
<dbReference type="EnsemblMetazoa" id="F28D1.1.1">
    <property type="protein sequence ID" value="F28D1.1.1"/>
    <property type="gene ID" value="WBGene00009211"/>
</dbReference>
<dbReference type="GeneID" id="178185"/>
<dbReference type="KEGG" id="cel:CELE_F28D1.1"/>
<dbReference type="UCSC" id="F28D1.1.1">
    <property type="organism name" value="c. elegans"/>
</dbReference>
<dbReference type="AGR" id="WB:WBGene00009211"/>
<dbReference type="CTD" id="178185"/>
<dbReference type="WormBase" id="F28D1.1">
    <property type="protein sequence ID" value="CE05741"/>
    <property type="gene ID" value="WBGene00009211"/>
    <property type="gene designation" value="wdr-46"/>
</dbReference>
<dbReference type="eggNOG" id="KOG1272">
    <property type="taxonomic scope" value="Eukaryota"/>
</dbReference>
<dbReference type="GeneTree" id="ENSGT00390000007075"/>
<dbReference type="HOGENOM" id="CLU_022996_2_1_1"/>
<dbReference type="InParanoid" id="Q19873"/>
<dbReference type="OMA" id="GPYHIDY"/>
<dbReference type="OrthoDB" id="10251154at2759"/>
<dbReference type="PhylomeDB" id="Q19873"/>
<dbReference type="Reactome" id="R-CEL-6791226">
    <property type="pathway name" value="Major pathway of rRNA processing in the nucleolus and cytosol"/>
</dbReference>
<dbReference type="PRO" id="PR:Q19873"/>
<dbReference type="Proteomes" id="UP000001940">
    <property type="component" value="Chromosome IV"/>
</dbReference>
<dbReference type="Bgee" id="WBGene00009211">
    <property type="expression patterns" value="Expressed in germ line (C elegans) and 4 other cell types or tissues"/>
</dbReference>
<dbReference type="GO" id="GO:0005730">
    <property type="term" value="C:nucleolus"/>
    <property type="evidence" value="ECO:0000314"/>
    <property type="project" value="WormBase"/>
</dbReference>
<dbReference type="GO" id="GO:0032040">
    <property type="term" value="C:small-subunit processome"/>
    <property type="evidence" value="ECO:0000318"/>
    <property type="project" value="GO_Central"/>
</dbReference>
<dbReference type="GO" id="GO:0000462">
    <property type="term" value="P:maturation of SSU-rRNA from tricistronic rRNA transcript (SSU-rRNA, 5.8S rRNA, LSU-rRNA)"/>
    <property type="evidence" value="ECO:0000318"/>
    <property type="project" value="GO_Central"/>
</dbReference>
<dbReference type="FunFam" id="2.130.10.10:FF:000378">
    <property type="entry name" value="U3 small nucleolar RNA-associated protein 7"/>
    <property type="match status" value="1"/>
</dbReference>
<dbReference type="Gene3D" id="2.130.10.10">
    <property type="entry name" value="YVTN repeat-like/Quinoprotein amine dehydrogenase"/>
    <property type="match status" value="1"/>
</dbReference>
<dbReference type="InterPro" id="IPR012952">
    <property type="entry name" value="BING4_C_dom"/>
</dbReference>
<dbReference type="InterPro" id="IPR015943">
    <property type="entry name" value="WD40/YVTN_repeat-like_dom_sf"/>
</dbReference>
<dbReference type="InterPro" id="IPR019775">
    <property type="entry name" value="WD40_repeat_CS"/>
</dbReference>
<dbReference type="InterPro" id="IPR036322">
    <property type="entry name" value="WD40_repeat_dom_sf"/>
</dbReference>
<dbReference type="InterPro" id="IPR001680">
    <property type="entry name" value="WD40_rpt"/>
</dbReference>
<dbReference type="InterPro" id="IPR040315">
    <property type="entry name" value="WDR46/Utp7"/>
</dbReference>
<dbReference type="PANTHER" id="PTHR14085:SF3">
    <property type="entry name" value="WD REPEAT-CONTAINING PROTEIN 46"/>
    <property type="match status" value="1"/>
</dbReference>
<dbReference type="PANTHER" id="PTHR14085">
    <property type="entry name" value="WD-REPEAT PROTEIN BING4"/>
    <property type="match status" value="1"/>
</dbReference>
<dbReference type="Pfam" id="PF08149">
    <property type="entry name" value="BING4CT"/>
    <property type="match status" value="1"/>
</dbReference>
<dbReference type="Pfam" id="PF00400">
    <property type="entry name" value="WD40"/>
    <property type="match status" value="1"/>
</dbReference>
<dbReference type="SMART" id="SM01033">
    <property type="entry name" value="BING4CT"/>
    <property type="match status" value="1"/>
</dbReference>
<dbReference type="SMART" id="SM00320">
    <property type="entry name" value="WD40"/>
    <property type="match status" value="3"/>
</dbReference>
<dbReference type="SUPFAM" id="SSF50978">
    <property type="entry name" value="WD40 repeat-like"/>
    <property type="match status" value="1"/>
</dbReference>
<dbReference type="PROSITE" id="PS00678">
    <property type="entry name" value="WD_REPEATS_1"/>
    <property type="match status" value="1"/>
</dbReference>
<dbReference type="PROSITE" id="PS50082">
    <property type="entry name" value="WD_REPEATS_2"/>
    <property type="match status" value="1"/>
</dbReference>
<dbReference type="PROSITE" id="PS50294">
    <property type="entry name" value="WD_REPEATS_REGION"/>
    <property type="match status" value="1"/>
</dbReference>
<proteinExistence type="inferred from homology"/>
<reference evidence="6" key="1">
    <citation type="journal article" date="1998" name="Science">
        <title>Genome sequence of the nematode C. elegans: a platform for investigating biology.</title>
        <authorList>
            <consortium name="The C. elegans sequencing consortium"/>
        </authorList>
    </citation>
    <scope>NUCLEOTIDE SEQUENCE [LARGE SCALE GENOMIC DNA]</scope>
    <source>
        <strain evidence="6">Bristol N2</strain>
    </source>
</reference>
<reference evidence="5" key="2">
    <citation type="journal article" date="2012" name="Free Radic. Biol. Med.">
        <title>Depletion of a nucleolar protein activates xenobiotic detoxification genes in Caenorhabditis elegans via Nrf/SKN-1 and p53/CEP-1.</title>
        <authorList>
            <person name="Leung C.K."/>
            <person name="Empinado H."/>
            <person name="Choe K.P."/>
        </authorList>
    </citation>
    <scope>FUNCTION</scope>
    <scope>SUBCELLULAR LOCATION</scope>
    <scope>DISRUPTION PHENOTYPE</scope>
</reference>
<protein>
    <recommendedName>
        <fullName evidence="7">WD repeat-containing protein 46</fullName>
    </recommendedName>
</protein>
<feature type="chain" id="PRO_0000460582" description="WD repeat-containing protein 46">
    <location>
        <begin position="1"/>
        <end position="580"/>
    </location>
</feature>
<feature type="repeat" description="WD 1" evidence="2">
    <location>
        <begin position="193"/>
        <end position="234"/>
    </location>
</feature>
<feature type="repeat" description="WD 2" evidence="2">
    <location>
        <begin position="235"/>
        <end position="272"/>
    </location>
</feature>
<feature type="repeat" description="WD 3" evidence="2">
    <location>
        <begin position="274"/>
        <end position="312"/>
    </location>
</feature>
<feature type="repeat" description="WD 4" evidence="2">
    <location>
        <begin position="315"/>
        <end position="354"/>
    </location>
</feature>
<feature type="repeat" description="WD 5" evidence="2">
    <location>
        <begin position="357"/>
        <end position="396"/>
    </location>
</feature>
<feature type="repeat" description="WD 6" evidence="2">
    <location>
        <begin position="399"/>
        <end position="436"/>
    </location>
</feature>
<feature type="region of interest" description="Disordered" evidence="3">
    <location>
        <begin position="34"/>
        <end position="108"/>
    </location>
</feature>
<feature type="compositionally biased region" description="Basic and acidic residues" evidence="3">
    <location>
        <begin position="64"/>
        <end position="85"/>
    </location>
</feature>
<feature type="compositionally biased region" description="Basic and acidic residues" evidence="3">
    <location>
        <begin position="98"/>
        <end position="108"/>
    </location>
</feature>
<evidence type="ECO:0000250" key="1">
    <source>
        <dbReference type="UniProtKB" id="O15213"/>
    </source>
</evidence>
<evidence type="ECO:0000255" key="2"/>
<evidence type="ECO:0000256" key="3">
    <source>
        <dbReference type="SAM" id="MobiDB-lite"/>
    </source>
</evidence>
<evidence type="ECO:0000269" key="4">
    <source>
    </source>
</evidence>
<evidence type="ECO:0000305" key="5"/>
<evidence type="ECO:0000312" key="6">
    <source>
        <dbReference type="Proteomes" id="UP000001940"/>
    </source>
</evidence>
<evidence type="ECO:0000312" key="7">
    <source>
        <dbReference type="WormBase" id="F28D1.1"/>
    </source>
</evidence>
<organism evidence="6">
    <name type="scientific">Caenorhabditis elegans</name>
    <dbReference type="NCBI Taxonomy" id="6239"/>
    <lineage>
        <taxon>Eukaryota</taxon>
        <taxon>Metazoa</taxon>
        <taxon>Ecdysozoa</taxon>
        <taxon>Nematoda</taxon>
        <taxon>Chromadorea</taxon>
        <taxon>Rhabditida</taxon>
        <taxon>Rhabditina</taxon>
        <taxon>Rhabditomorpha</taxon>
        <taxon>Rhabditoidea</taxon>
        <taxon>Rhabditidae</taxon>
        <taxon>Peloderinae</taxon>
        <taxon>Caenorhabditis</taxon>
    </lineage>
</organism>
<keyword id="KW-0539">Nucleus</keyword>
<keyword id="KW-1185">Reference proteome</keyword>
<keyword id="KW-0677">Repeat</keyword>
<keyword id="KW-0698">rRNA processing</keyword>
<keyword id="KW-0853">WD repeat</keyword>
<comment type="function">
    <text evidence="1 4">Scaffold component of the nucleolar structure (By similarity). Part of the small subunit (SSU) processome, first precursor of the small eukaryotic ribosomal subunit (By similarity). Required for 18S rRNA processing (PubMed:22240150). Plays a role in negative regulation of detoxification genes by inhibiting protein levels of transcription factor skn-1, leading to down-regulation of skn-1 target genes (PubMed:22240150).</text>
</comment>
<comment type="subunit">
    <text evidence="1">Part of the small subunit (SSU) processome.</text>
</comment>
<comment type="subcellular location">
    <subcellularLocation>
        <location evidence="4">Nucleus</location>
        <location evidence="4">Nucleolus</location>
    </subcellularLocation>
</comment>
<comment type="disruption phenotype">
    <text evidence="4">RNAi-mediated knockdown results in induction of glutathione S-transferase gst-4.</text>
</comment>
<gene>
    <name evidence="7" type="primary">wdr-46</name>
    <name evidence="7" type="ORF">F28D1.1</name>
</gene>
<name>WDR46_CAEEL</name>
<accession>Q19873</accession>